<protein>
    <recommendedName>
        <fullName evidence="1">Large ribosomal subunit protein uL5</fullName>
    </recommendedName>
    <alternativeName>
        <fullName evidence="2">50S ribosomal protein L5</fullName>
    </alternativeName>
</protein>
<accession>Q2YRA7</accession>
<sequence>MAEAKALPRFKKLYQDNIRKALLEEFKYDNEMQIPRITKVVLNMGVGEATGDSKKPAVAAEDLAMIAGQKAVVTRARNSIATFKLREGMPIGAKVTLRQDRMYEFLDRLITIALPRVRDFRGLNPKSFDGRGNYAMGIKEHIVFPEINYDKVDQIWGMDIIVCTTAKTDDEARSFLRAFNFPFRQ</sequence>
<name>RL5_BRUA2</name>
<dbReference type="EMBL" id="AM040264">
    <property type="protein sequence ID" value="CAJ11199.1"/>
    <property type="molecule type" value="Genomic_DNA"/>
</dbReference>
<dbReference type="RefSeq" id="WP_011382119.1">
    <property type="nucleotide sequence ID" value="NC_007618.1"/>
</dbReference>
<dbReference type="SMR" id="Q2YRA7"/>
<dbReference type="STRING" id="359391.BAB1_1243"/>
<dbReference type="KEGG" id="bmf:BAB1_1243"/>
<dbReference type="PATRIC" id="fig|359391.4.peg.1292"/>
<dbReference type="HOGENOM" id="CLU_061015_2_1_5"/>
<dbReference type="Proteomes" id="UP000002719">
    <property type="component" value="Chromosome I"/>
</dbReference>
<dbReference type="GO" id="GO:1990904">
    <property type="term" value="C:ribonucleoprotein complex"/>
    <property type="evidence" value="ECO:0007669"/>
    <property type="project" value="UniProtKB-KW"/>
</dbReference>
<dbReference type="GO" id="GO:0005840">
    <property type="term" value="C:ribosome"/>
    <property type="evidence" value="ECO:0007669"/>
    <property type="project" value="UniProtKB-KW"/>
</dbReference>
<dbReference type="GO" id="GO:0019843">
    <property type="term" value="F:rRNA binding"/>
    <property type="evidence" value="ECO:0007669"/>
    <property type="project" value="UniProtKB-UniRule"/>
</dbReference>
<dbReference type="GO" id="GO:0003735">
    <property type="term" value="F:structural constituent of ribosome"/>
    <property type="evidence" value="ECO:0007669"/>
    <property type="project" value="InterPro"/>
</dbReference>
<dbReference type="GO" id="GO:0000049">
    <property type="term" value="F:tRNA binding"/>
    <property type="evidence" value="ECO:0007669"/>
    <property type="project" value="UniProtKB-UniRule"/>
</dbReference>
<dbReference type="GO" id="GO:0006412">
    <property type="term" value="P:translation"/>
    <property type="evidence" value="ECO:0007669"/>
    <property type="project" value="UniProtKB-UniRule"/>
</dbReference>
<dbReference type="FunFam" id="3.30.1440.10:FF:000001">
    <property type="entry name" value="50S ribosomal protein L5"/>
    <property type="match status" value="1"/>
</dbReference>
<dbReference type="Gene3D" id="3.30.1440.10">
    <property type="match status" value="1"/>
</dbReference>
<dbReference type="HAMAP" id="MF_01333_B">
    <property type="entry name" value="Ribosomal_uL5_B"/>
    <property type="match status" value="1"/>
</dbReference>
<dbReference type="InterPro" id="IPR002132">
    <property type="entry name" value="Ribosomal_uL5"/>
</dbReference>
<dbReference type="InterPro" id="IPR020930">
    <property type="entry name" value="Ribosomal_uL5_bac-type"/>
</dbReference>
<dbReference type="InterPro" id="IPR031309">
    <property type="entry name" value="Ribosomal_uL5_C"/>
</dbReference>
<dbReference type="InterPro" id="IPR020929">
    <property type="entry name" value="Ribosomal_uL5_CS"/>
</dbReference>
<dbReference type="InterPro" id="IPR022803">
    <property type="entry name" value="Ribosomal_uL5_dom_sf"/>
</dbReference>
<dbReference type="InterPro" id="IPR031310">
    <property type="entry name" value="Ribosomal_uL5_N"/>
</dbReference>
<dbReference type="NCBIfam" id="NF000585">
    <property type="entry name" value="PRK00010.1"/>
    <property type="match status" value="1"/>
</dbReference>
<dbReference type="PANTHER" id="PTHR11994">
    <property type="entry name" value="60S RIBOSOMAL PROTEIN L11-RELATED"/>
    <property type="match status" value="1"/>
</dbReference>
<dbReference type="Pfam" id="PF00281">
    <property type="entry name" value="Ribosomal_L5"/>
    <property type="match status" value="1"/>
</dbReference>
<dbReference type="Pfam" id="PF00673">
    <property type="entry name" value="Ribosomal_L5_C"/>
    <property type="match status" value="1"/>
</dbReference>
<dbReference type="PIRSF" id="PIRSF002161">
    <property type="entry name" value="Ribosomal_L5"/>
    <property type="match status" value="1"/>
</dbReference>
<dbReference type="SUPFAM" id="SSF55282">
    <property type="entry name" value="RL5-like"/>
    <property type="match status" value="1"/>
</dbReference>
<dbReference type="PROSITE" id="PS00358">
    <property type="entry name" value="RIBOSOMAL_L5"/>
    <property type="match status" value="1"/>
</dbReference>
<evidence type="ECO:0000255" key="1">
    <source>
        <dbReference type="HAMAP-Rule" id="MF_01333"/>
    </source>
</evidence>
<evidence type="ECO:0000305" key="2"/>
<comment type="function">
    <text evidence="1">This is one of the proteins that bind and probably mediate the attachment of the 5S RNA into the large ribosomal subunit, where it forms part of the central protuberance. In the 70S ribosome it contacts protein S13 of the 30S subunit (bridge B1b), connecting the 2 subunits; this bridge is implicated in subunit movement. Contacts the P site tRNA; the 5S rRNA and some of its associated proteins might help stabilize positioning of ribosome-bound tRNAs.</text>
</comment>
<comment type="subunit">
    <text evidence="1">Part of the 50S ribosomal subunit; part of the 5S rRNA/L5/L18/L25 subcomplex. Contacts the 5S rRNA and the P site tRNA. Forms a bridge to the 30S subunit in the 70S ribosome.</text>
</comment>
<comment type="similarity">
    <text evidence="1">Belongs to the universal ribosomal protein uL5 family.</text>
</comment>
<organism>
    <name type="scientific">Brucella abortus (strain 2308)</name>
    <dbReference type="NCBI Taxonomy" id="359391"/>
    <lineage>
        <taxon>Bacteria</taxon>
        <taxon>Pseudomonadati</taxon>
        <taxon>Pseudomonadota</taxon>
        <taxon>Alphaproteobacteria</taxon>
        <taxon>Hyphomicrobiales</taxon>
        <taxon>Brucellaceae</taxon>
        <taxon>Brucella/Ochrobactrum group</taxon>
        <taxon>Brucella</taxon>
    </lineage>
</organism>
<feature type="chain" id="PRO_0000242977" description="Large ribosomal subunit protein uL5">
    <location>
        <begin position="1"/>
        <end position="185"/>
    </location>
</feature>
<reference key="1">
    <citation type="journal article" date="2005" name="Infect. Immun.">
        <title>Whole-genome analyses of speciation events in pathogenic Brucellae.</title>
        <authorList>
            <person name="Chain P.S."/>
            <person name="Comerci D.J."/>
            <person name="Tolmasky M.E."/>
            <person name="Larimer F.W."/>
            <person name="Malfatti S.A."/>
            <person name="Vergez L.M."/>
            <person name="Aguero F."/>
            <person name="Land M.L."/>
            <person name="Ugalde R.A."/>
            <person name="Garcia E."/>
        </authorList>
    </citation>
    <scope>NUCLEOTIDE SEQUENCE [LARGE SCALE GENOMIC DNA]</scope>
    <source>
        <strain>2308</strain>
    </source>
</reference>
<proteinExistence type="inferred from homology"/>
<gene>
    <name evidence="1" type="primary">rplE</name>
    <name type="ordered locus">BAB1_1243</name>
</gene>
<keyword id="KW-1185">Reference proteome</keyword>
<keyword id="KW-0687">Ribonucleoprotein</keyword>
<keyword id="KW-0689">Ribosomal protein</keyword>
<keyword id="KW-0694">RNA-binding</keyword>
<keyword id="KW-0699">rRNA-binding</keyword>
<keyword id="KW-0820">tRNA-binding</keyword>